<keyword id="KW-0963">Cytoplasm</keyword>
<keyword id="KW-0507">mRNA processing</keyword>
<keyword id="KW-0508">mRNA splicing</keyword>
<keyword id="KW-0539">Nucleus</keyword>
<keyword id="KW-1185">Reference proteome</keyword>
<keyword id="KW-0747">Spliceosome</keyword>
<proteinExistence type="inferred from homology"/>
<reference key="1">
    <citation type="journal article" date="2005" name="Science">
        <title>The genome of the basidiomycetous yeast and human pathogen Cryptococcus neoformans.</title>
        <authorList>
            <person name="Loftus B.J."/>
            <person name="Fung E."/>
            <person name="Roncaglia P."/>
            <person name="Rowley D."/>
            <person name="Amedeo P."/>
            <person name="Bruno D."/>
            <person name="Vamathevan J."/>
            <person name="Miranda M."/>
            <person name="Anderson I.J."/>
            <person name="Fraser J.A."/>
            <person name="Allen J.E."/>
            <person name="Bosdet I.E."/>
            <person name="Brent M.R."/>
            <person name="Chiu R."/>
            <person name="Doering T.L."/>
            <person name="Donlin M.J."/>
            <person name="D'Souza C.A."/>
            <person name="Fox D.S."/>
            <person name="Grinberg V."/>
            <person name="Fu J."/>
            <person name="Fukushima M."/>
            <person name="Haas B.J."/>
            <person name="Huang J.C."/>
            <person name="Janbon G."/>
            <person name="Jones S.J.M."/>
            <person name="Koo H.L."/>
            <person name="Krzywinski M.I."/>
            <person name="Kwon-Chung K.J."/>
            <person name="Lengeler K.B."/>
            <person name="Maiti R."/>
            <person name="Marra M.A."/>
            <person name="Marra R.E."/>
            <person name="Mathewson C.A."/>
            <person name="Mitchell T.G."/>
            <person name="Pertea M."/>
            <person name="Riggs F.R."/>
            <person name="Salzberg S.L."/>
            <person name="Schein J.E."/>
            <person name="Shvartsbeyn A."/>
            <person name="Shin H."/>
            <person name="Shumway M."/>
            <person name="Specht C.A."/>
            <person name="Suh B.B."/>
            <person name="Tenney A."/>
            <person name="Utterback T.R."/>
            <person name="Wickes B.L."/>
            <person name="Wortman J.R."/>
            <person name="Wye N.H."/>
            <person name="Kronstad J.W."/>
            <person name="Lodge J.K."/>
            <person name="Heitman J."/>
            <person name="Davis R.W."/>
            <person name="Fraser C.M."/>
            <person name="Hyman R.W."/>
        </authorList>
    </citation>
    <scope>NUCLEOTIDE SEQUENCE [LARGE SCALE GENOMIC DNA]</scope>
    <source>
        <strain>JEC21 / ATCC MYA-565</strain>
    </source>
</reference>
<organism>
    <name type="scientific">Cryptococcus neoformans var. neoformans serotype D (strain JEC21 / ATCC MYA-565)</name>
    <name type="common">Filobasidiella neoformans</name>
    <dbReference type="NCBI Taxonomy" id="214684"/>
    <lineage>
        <taxon>Eukaryota</taxon>
        <taxon>Fungi</taxon>
        <taxon>Dikarya</taxon>
        <taxon>Basidiomycota</taxon>
        <taxon>Agaricomycotina</taxon>
        <taxon>Tremellomycetes</taxon>
        <taxon>Tremellales</taxon>
        <taxon>Cryptococcaceae</taxon>
        <taxon>Cryptococcus</taxon>
        <taxon>Cryptococcus neoformans species complex</taxon>
    </lineage>
</organism>
<protein>
    <recommendedName>
        <fullName>Pre-mRNA-splicing factor ISY1</fullName>
    </recommendedName>
</protein>
<dbReference type="EMBL" id="AE017344">
    <property type="protein sequence ID" value="AAW43321.1"/>
    <property type="molecule type" value="Genomic_DNA"/>
</dbReference>
<dbReference type="RefSeq" id="XP_570628.1">
    <property type="nucleotide sequence ID" value="XM_570628.1"/>
</dbReference>
<dbReference type="SMR" id="P0CO36"/>
<dbReference type="STRING" id="214684.P0CO36"/>
<dbReference type="PaxDb" id="214684-P0CO36"/>
<dbReference type="EnsemblFungi" id="AAW43321">
    <property type="protein sequence ID" value="AAW43321"/>
    <property type="gene ID" value="CND03910"/>
</dbReference>
<dbReference type="GeneID" id="3257141"/>
<dbReference type="KEGG" id="cne:CND03910"/>
<dbReference type="VEuPathDB" id="FungiDB:CND03910"/>
<dbReference type="eggNOG" id="KOG3068">
    <property type="taxonomic scope" value="Eukaryota"/>
</dbReference>
<dbReference type="HOGENOM" id="CLU_043453_0_1_1"/>
<dbReference type="InParanoid" id="P0CO36"/>
<dbReference type="OMA" id="WEDAYTH"/>
<dbReference type="OrthoDB" id="1739576at2759"/>
<dbReference type="Proteomes" id="UP000002149">
    <property type="component" value="Chromosome 4"/>
</dbReference>
<dbReference type="GO" id="GO:0071013">
    <property type="term" value="C:catalytic step 2 spliceosome"/>
    <property type="evidence" value="ECO:0000318"/>
    <property type="project" value="GO_Central"/>
</dbReference>
<dbReference type="GO" id="GO:0005737">
    <property type="term" value="C:cytoplasm"/>
    <property type="evidence" value="ECO:0007669"/>
    <property type="project" value="UniProtKB-SubCell"/>
</dbReference>
<dbReference type="GO" id="GO:0071014">
    <property type="term" value="C:post-mRNA release spliceosomal complex"/>
    <property type="evidence" value="ECO:0000318"/>
    <property type="project" value="GO_Central"/>
</dbReference>
<dbReference type="GO" id="GO:0071020">
    <property type="term" value="C:post-spliceosomal complex"/>
    <property type="evidence" value="ECO:0000318"/>
    <property type="project" value="GO_Central"/>
</dbReference>
<dbReference type="GO" id="GO:0000974">
    <property type="term" value="C:Prp19 complex"/>
    <property type="evidence" value="ECO:0000318"/>
    <property type="project" value="GO_Central"/>
</dbReference>
<dbReference type="GO" id="GO:0000350">
    <property type="term" value="P:generation of catalytic spliceosome for second transesterification step"/>
    <property type="evidence" value="ECO:0000318"/>
    <property type="project" value="GO_Central"/>
</dbReference>
<dbReference type="GO" id="GO:0000389">
    <property type="term" value="P:mRNA 3'-splice site recognition"/>
    <property type="evidence" value="ECO:0000318"/>
    <property type="project" value="GO_Central"/>
</dbReference>
<dbReference type="FunFam" id="1.10.287.660:FF:000001">
    <property type="entry name" value="pre-mRNA-splicing factor ISY1 homolog"/>
    <property type="match status" value="1"/>
</dbReference>
<dbReference type="Gene3D" id="1.10.287.660">
    <property type="entry name" value="Helix hairpin bin"/>
    <property type="match status" value="1"/>
</dbReference>
<dbReference type="InterPro" id="IPR029012">
    <property type="entry name" value="Helix_hairpin_bin_sf"/>
</dbReference>
<dbReference type="InterPro" id="IPR009360">
    <property type="entry name" value="Isy1"/>
</dbReference>
<dbReference type="InterPro" id="IPR037200">
    <property type="entry name" value="Isy1_sf"/>
</dbReference>
<dbReference type="PANTHER" id="PTHR13021">
    <property type="entry name" value="PRE-MRNA-SPLICING FACTOR ISY1"/>
    <property type="match status" value="1"/>
</dbReference>
<dbReference type="Pfam" id="PF06246">
    <property type="entry name" value="Isy1"/>
    <property type="match status" value="1"/>
</dbReference>
<dbReference type="SUPFAM" id="SSF140102">
    <property type="entry name" value="ISY1 domain-like"/>
    <property type="match status" value="1"/>
</dbReference>
<feature type="chain" id="PRO_0000192967" description="Pre-mRNA-splicing factor ISY1">
    <location>
        <begin position="1"/>
        <end position="348"/>
    </location>
</feature>
<feature type="region of interest" description="Disordered" evidence="2">
    <location>
        <begin position="220"/>
        <end position="282"/>
    </location>
</feature>
<feature type="compositionally biased region" description="Basic and acidic residues" evidence="2">
    <location>
        <begin position="264"/>
        <end position="278"/>
    </location>
</feature>
<name>ISY1_CRYNJ</name>
<evidence type="ECO:0000250" key="1"/>
<evidence type="ECO:0000256" key="2">
    <source>
        <dbReference type="SAM" id="MobiDB-lite"/>
    </source>
</evidence>
<evidence type="ECO:0000305" key="3"/>
<gene>
    <name type="primary">ISY1</name>
    <name type="ordered locus">CND03910</name>
</gene>
<sequence>MARNSEKAQSMLYRFREQQAIDMGIGTRQKGDRRPRMASSCTSLREAERWRGDILRDISRKVSKIQDVALTDYQVRDLNDEINQLFREKRAWENQIINLGGANYRRAAGVMTDDEGREVPGTRGYKYFGRAKELPGVKELFTRSTQQATEESARTASFQMFRHQGPDYYGDEDELDKELIDTEDVEAREGWEDQVRKSASTLGISDETLLPRYPVSISSKLPDASVDPTQLQENEEAPQKSEKALKGTGKSKRKYKGVNDLEEGGQKEEQEEAKKSKTDTSVAINSVAEGQNIASETAVAAAQAQAAAFLGVLDAESLEFPTMPSKDEMAKVLLEVRKQALKEEYGVY</sequence>
<comment type="function">
    <text evidence="1">Involved in pre-mRNA splicing.</text>
</comment>
<comment type="subunit">
    <text evidence="1">Associated with the spliceosome.</text>
</comment>
<comment type="subcellular location">
    <subcellularLocation>
        <location evidence="1">Cytoplasm</location>
    </subcellularLocation>
    <subcellularLocation>
        <location evidence="1">Nucleus</location>
    </subcellularLocation>
</comment>
<comment type="similarity">
    <text evidence="3">Belongs to the ISY1 family.</text>
</comment>
<accession>P0CO36</accession>
<accession>Q55U67</accession>
<accession>Q5KI78</accession>